<gene>
    <name type="ordered locus">YBR277C</name>
    <name type="ORF">YBR2014</name>
</gene>
<proteinExistence type="uncertain"/>
<accession>P38350</accession>
<comment type="miscellaneous">
    <text evidence="1">Partially overlaps DPB3.</text>
</comment>
<comment type="caution">
    <text evidence="2">Product of a dubious gene prediction unlikely to encode a functional protein. Because of that it is not part of the S.cerevisiae S288c complete/reference proteome set.</text>
</comment>
<protein>
    <recommendedName>
        <fullName>Putative uncharacterized protein YBR277C</fullName>
    </recommendedName>
</protein>
<organism>
    <name type="scientific">Saccharomyces cerevisiae (strain ATCC 204508 / S288c)</name>
    <name type="common">Baker's yeast</name>
    <dbReference type="NCBI Taxonomy" id="559292"/>
    <lineage>
        <taxon>Eukaryota</taxon>
        <taxon>Fungi</taxon>
        <taxon>Dikarya</taxon>
        <taxon>Ascomycota</taxon>
        <taxon>Saccharomycotina</taxon>
        <taxon>Saccharomycetes</taxon>
        <taxon>Saccharomycetales</taxon>
        <taxon>Saccharomycetaceae</taxon>
        <taxon>Saccharomyces</taxon>
    </lineage>
</organism>
<name>YB9U_YEAST</name>
<evidence type="ECO:0000305" key="1"/>
<evidence type="ECO:0000305" key="2">
    <source>
    </source>
</evidence>
<dbReference type="EMBL" id="X76053">
    <property type="protein sequence ID" value="CAA53640.1"/>
    <property type="molecule type" value="Genomic_DNA"/>
</dbReference>
<dbReference type="EMBL" id="Z36146">
    <property type="protein sequence ID" value="CAA85241.1"/>
    <property type="molecule type" value="Genomic_DNA"/>
</dbReference>
<dbReference type="PIR" id="S44539">
    <property type="entry name" value="S44539"/>
</dbReference>
<dbReference type="DIP" id="DIP-5644N"/>
<dbReference type="PaxDb" id="4932-YBR277C"/>
<dbReference type="EnsemblFungi" id="YBR277C_mRNA">
    <property type="protein sequence ID" value="YBR277C"/>
    <property type="gene ID" value="YBR277C"/>
</dbReference>
<dbReference type="AGR" id="SGD:S000000481"/>
<dbReference type="SGD" id="S000000481">
    <property type="gene designation" value="YBR277C"/>
</dbReference>
<dbReference type="HOGENOM" id="CLU_1908315_0_0_1"/>
<sequence>MFSSLFLSSALFFFSCLMASSRNLKLSLFSTHSSIEFRLNRRLVFPFEFSCAKTSDSSTRFCTNNSAANAVADIATLDVITYSGSHLAIFFTLDIGKTGAFSLTKLDIFFATRLTLACFYLLGQAVVKAINFA</sequence>
<reference key="1">
    <citation type="journal article" date="1994" name="Yeast">
        <title>The sequence of a 32,420 bp segment located on the right arm of chromosome II from Saccharomyces cerevisiae.</title>
        <authorList>
            <person name="Holmstroem K."/>
            <person name="Brandt T."/>
            <person name="Kallesoe T."/>
        </authorList>
    </citation>
    <scope>NUCLEOTIDE SEQUENCE [GENOMIC DNA]</scope>
    <source>
        <strain>ATCC 204508 / S288c</strain>
    </source>
</reference>
<reference key="2">
    <citation type="journal article" date="1994" name="EMBO J.">
        <title>Complete DNA sequence of yeast chromosome II.</title>
        <authorList>
            <person name="Feldmann H."/>
            <person name="Aigle M."/>
            <person name="Aljinovic G."/>
            <person name="Andre B."/>
            <person name="Baclet M.C."/>
            <person name="Barthe C."/>
            <person name="Baur A."/>
            <person name="Becam A.-M."/>
            <person name="Biteau N."/>
            <person name="Boles E."/>
            <person name="Brandt T."/>
            <person name="Brendel M."/>
            <person name="Brueckner M."/>
            <person name="Bussereau F."/>
            <person name="Christiansen C."/>
            <person name="Contreras R."/>
            <person name="Crouzet M."/>
            <person name="Cziepluch C."/>
            <person name="Demolis N."/>
            <person name="Delaveau T."/>
            <person name="Doignon F."/>
            <person name="Domdey H."/>
            <person name="Duesterhus S."/>
            <person name="Dubois E."/>
            <person name="Dujon B."/>
            <person name="El Bakkoury M."/>
            <person name="Entian K.-D."/>
            <person name="Feuermann M."/>
            <person name="Fiers W."/>
            <person name="Fobo G.M."/>
            <person name="Fritz C."/>
            <person name="Gassenhuber J."/>
            <person name="Glansdorff N."/>
            <person name="Goffeau A."/>
            <person name="Grivell L.A."/>
            <person name="de Haan M."/>
            <person name="Hein C."/>
            <person name="Herbert C.J."/>
            <person name="Hollenberg C.P."/>
            <person name="Holmstroem K."/>
            <person name="Jacq C."/>
            <person name="Jacquet M."/>
            <person name="Jauniaux J.-C."/>
            <person name="Jonniaux J.-L."/>
            <person name="Kallesoee T."/>
            <person name="Kiesau P."/>
            <person name="Kirchrath L."/>
            <person name="Koetter P."/>
            <person name="Korol S."/>
            <person name="Liebl S."/>
            <person name="Logghe M."/>
            <person name="Lohan A.J.E."/>
            <person name="Louis E.J."/>
            <person name="Li Z.Y."/>
            <person name="Maat M.J."/>
            <person name="Mallet L."/>
            <person name="Mannhaupt G."/>
            <person name="Messenguy F."/>
            <person name="Miosga T."/>
            <person name="Molemans F."/>
            <person name="Mueller S."/>
            <person name="Nasr F."/>
            <person name="Obermaier B."/>
            <person name="Perea J."/>
            <person name="Pierard A."/>
            <person name="Piravandi E."/>
            <person name="Pohl F.M."/>
            <person name="Pohl T.M."/>
            <person name="Potier S."/>
            <person name="Proft M."/>
            <person name="Purnelle B."/>
            <person name="Ramezani Rad M."/>
            <person name="Rieger M."/>
            <person name="Rose M."/>
            <person name="Schaaff-Gerstenschlaeger I."/>
            <person name="Scherens B."/>
            <person name="Schwarzlose C."/>
            <person name="Skala J."/>
            <person name="Slonimski P.P."/>
            <person name="Smits P.H.M."/>
            <person name="Souciet J.-L."/>
            <person name="Steensma H.Y."/>
            <person name="Stucka R."/>
            <person name="Urrestarazu L.A."/>
            <person name="van der Aart Q.J.M."/>
            <person name="Van Dyck L."/>
            <person name="Vassarotti A."/>
            <person name="Vetter I."/>
            <person name="Vierendeels F."/>
            <person name="Vissers S."/>
            <person name="Wagner G."/>
            <person name="de Wergifosse P."/>
            <person name="Wolfe K.H."/>
            <person name="Zagulski M."/>
            <person name="Zimmermann F.K."/>
            <person name="Mewes H.-W."/>
            <person name="Kleine K."/>
        </authorList>
    </citation>
    <scope>NUCLEOTIDE SEQUENCE [LARGE SCALE GENOMIC DNA]</scope>
    <source>
        <strain>ATCC 204508 / S288c</strain>
    </source>
</reference>
<reference key="3">
    <citation type="journal article" date="2014" name="G3 (Bethesda)">
        <title>The reference genome sequence of Saccharomyces cerevisiae: Then and now.</title>
        <authorList>
            <person name="Engel S.R."/>
            <person name="Dietrich F.S."/>
            <person name="Fisk D.G."/>
            <person name="Binkley G."/>
            <person name="Balakrishnan R."/>
            <person name="Costanzo M.C."/>
            <person name="Dwight S.S."/>
            <person name="Hitz B.C."/>
            <person name="Karra K."/>
            <person name="Nash R.S."/>
            <person name="Weng S."/>
            <person name="Wong E.D."/>
            <person name="Lloyd P."/>
            <person name="Skrzypek M.S."/>
            <person name="Miyasato S.R."/>
            <person name="Simison M."/>
            <person name="Cherry J.M."/>
        </authorList>
    </citation>
    <scope>GENOME REANNOTATION</scope>
    <source>
        <strain>ATCC 204508 / S288c</strain>
    </source>
</reference>
<feature type="chain" id="PRO_0000202533" description="Putative uncharacterized protein YBR277C">
    <location>
        <begin position="1"/>
        <end position="133"/>
    </location>
</feature>